<accession>A0M6N1</accession>
<name>RBFA_CHRFK</name>
<gene>
    <name evidence="1" type="primary">rbfA</name>
    <name type="ordered locus">GFO_3334</name>
</gene>
<dbReference type="EMBL" id="CU207366">
    <property type="protein sequence ID" value="CAL68276.1"/>
    <property type="molecule type" value="Genomic_DNA"/>
</dbReference>
<dbReference type="RefSeq" id="WP_011711177.1">
    <property type="nucleotide sequence ID" value="NC_008571.1"/>
</dbReference>
<dbReference type="SMR" id="A0M6N1"/>
<dbReference type="STRING" id="411154.GFO_3334"/>
<dbReference type="KEGG" id="gfo:GFO_3334"/>
<dbReference type="eggNOG" id="COG0858">
    <property type="taxonomic scope" value="Bacteria"/>
</dbReference>
<dbReference type="HOGENOM" id="CLU_089475_4_1_10"/>
<dbReference type="OrthoDB" id="9811910at2"/>
<dbReference type="Proteomes" id="UP000000755">
    <property type="component" value="Chromosome"/>
</dbReference>
<dbReference type="GO" id="GO:0005829">
    <property type="term" value="C:cytosol"/>
    <property type="evidence" value="ECO:0007669"/>
    <property type="project" value="TreeGrafter"/>
</dbReference>
<dbReference type="GO" id="GO:0043024">
    <property type="term" value="F:ribosomal small subunit binding"/>
    <property type="evidence" value="ECO:0007669"/>
    <property type="project" value="TreeGrafter"/>
</dbReference>
<dbReference type="GO" id="GO:0030490">
    <property type="term" value="P:maturation of SSU-rRNA"/>
    <property type="evidence" value="ECO:0007669"/>
    <property type="project" value="UniProtKB-UniRule"/>
</dbReference>
<dbReference type="Gene3D" id="3.30.300.20">
    <property type="match status" value="1"/>
</dbReference>
<dbReference type="HAMAP" id="MF_00003">
    <property type="entry name" value="RbfA"/>
    <property type="match status" value="1"/>
</dbReference>
<dbReference type="InterPro" id="IPR015946">
    <property type="entry name" value="KH_dom-like_a/b"/>
</dbReference>
<dbReference type="InterPro" id="IPR000238">
    <property type="entry name" value="RbfA"/>
</dbReference>
<dbReference type="InterPro" id="IPR023799">
    <property type="entry name" value="RbfA_dom_sf"/>
</dbReference>
<dbReference type="NCBIfam" id="TIGR00082">
    <property type="entry name" value="rbfA"/>
    <property type="match status" value="1"/>
</dbReference>
<dbReference type="PANTHER" id="PTHR33515">
    <property type="entry name" value="RIBOSOME-BINDING FACTOR A, CHLOROPLASTIC-RELATED"/>
    <property type="match status" value="1"/>
</dbReference>
<dbReference type="PANTHER" id="PTHR33515:SF1">
    <property type="entry name" value="RIBOSOME-BINDING FACTOR A, CHLOROPLASTIC-RELATED"/>
    <property type="match status" value="1"/>
</dbReference>
<dbReference type="Pfam" id="PF02033">
    <property type="entry name" value="RBFA"/>
    <property type="match status" value="1"/>
</dbReference>
<dbReference type="SUPFAM" id="SSF89919">
    <property type="entry name" value="Ribosome-binding factor A, RbfA"/>
    <property type="match status" value="1"/>
</dbReference>
<reference key="1">
    <citation type="journal article" date="2006" name="Environ. Microbiol.">
        <title>Whole genome analysis of the marine Bacteroidetes'Gramella forsetii' reveals adaptations to degradation of polymeric organic matter.</title>
        <authorList>
            <person name="Bauer M."/>
            <person name="Kube M."/>
            <person name="Teeling H."/>
            <person name="Richter M."/>
            <person name="Lombardot T."/>
            <person name="Allers E."/>
            <person name="Wuerdemann C.A."/>
            <person name="Quast C."/>
            <person name="Kuhl H."/>
            <person name="Knaust F."/>
            <person name="Woebken D."/>
            <person name="Bischof K."/>
            <person name="Mussmann M."/>
            <person name="Choudhuri J.V."/>
            <person name="Meyer F."/>
            <person name="Reinhardt R."/>
            <person name="Amann R.I."/>
            <person name="Gloeckner F.O."/>
        </authorList>
    </citation>
    <scope>NUCLEOTIDE SEQUENCE [LARGE SCALE GENOMIC DNA]</scope>
    <source>
        <strain>DSM 17595 / CGMCC 1.15422 / KT0803</strain>
    </source>
</reference>
<organism>
    <name type="scientific">Christiangramia forsetii (strain DSM 17595 / CGMCC 1.15422 / KT0803)</name>
    <name type="common">Gramella forsetii</name>
    <dbReference type="NCBI Taxonomy" id="411154"/>
    <lineage>
        <taxon>Bacteria</taxon>
        <taxon>Pseudomonadati</taxon>
        <taxon>Bacteroidota</taxon>
        <taxon>Flavobacteriia</taxon>
        <taxon>Flavobacteriales</taxon>
        <taxon>Flavobacteriaceae</taxon>
        <taxon>Christiangramia</taxon>
    </lineage>
</organism>
<sequence>MEETNRQKKIGGLLQKDLADILQNSLRESGRTGILISVSKVRVTTDLSIAKAYVSIFPSKHQEEVIKEINENKSQIKHEMAQRTRHQLRKMPDLSFYVDDSLEYIDGIEKSIKGKEDPVANPDLLDKRKKS</sequence>
<keyword id="KW-0963">Cytoplasm</keyword>
<keyword id="KW-0690">Ribosome biogenesis</keyword>
<protein>
    <recommendedName>
        <fullName evidence="1">Ribosome-binding factor A</fullName>
    </recommendedName>
</protein>
<proteinExistence type="inferred from homology"/>
<evidence type="ECO:0000255" key="1">
    <source>
        <dbReference type="HAMAP-Rule" id="MF_00003"/>
    </source>
</evidence>
<comment type="function">
    <text evidence="1">One of several proteins that assist in the late maturation steps of the functional core of the 30S ribosomal subunit. Associates with free 30S ribosomal subunits (but not with 30S subunits that are part of 70S ribosomes or polysomes). Required for efficient processing of 16S rRNA. May interact with the 5'-terminal helix region of 16S rRNA.</text>
</comment>
<comment type="subunit">
    <text evidence="1">Monomer. Binds 30S ribosomal subunits, but not 50S ribosomal subunits or 70S ribosomes.</text>
</comment>
<comment type="subcellular location">
    <subcellularLocation>
        <location evidence="1">Cytoplasm</location>
    </subcellularLocation>
</comment>
<comment type="similarity">
    <text evidence="1">Belongs to the RbfA family.</text>
</comment>
<feature type="chain" id="PRO_0000321222" description="Ribosome-binding factor A">
    <location>
        <begin position="1"/>
        <end position="131"/>
    </location>
</feature>